<keyword id="KW-0030">Aminoacyl-tRNA synthetase</keyword>
<keyword id="KW-0067">ATP-binding</keyword>
<keyword id="KW-0963">Cytoplasm</keyword>
<keyword id="KW-0436">Ligase</keyword>
<keyword id="KW-0460">Magnesium</keyword>
<keyword id="KW-0479">Metal-binding</keyword>
<keyword id="KW-0547">Nucleotide-binding</keyword>
<keyword id="KW-0648">Protein biosynthesis</keyword>
<keyword id="KW-1185">Reference proteome</keyword>
<reference key="1">
    <citation type="journal article" date="2002" name="Nat. Genet.">
        <title>Genome sequence of the endocellular obligate symbiont of tsetse flies, Wigglesworthia glossinidia.</title>
        <authorList>
            <person name="Akman L."/>
            <person name="Yamashita A."/>
            <person name="Watanabe H."/>
            <person name="Oshima K."/>
            <person name="Shiba T."/>
            <person name="Hattori M."/>
            <person name="Aksoy S."/>
        </authorList>
    </citation>
    <scope>NUCLEOTIDE SEQUENCE [LARGE SCALE GENOMIC DNA]</scope>
</reference>
<comment type="catalytic activity">
    <reaction evidence="1">
        <text>tRNA(Phe) + L-phenylalanine + ATP = L-phenylalanyl-tRNA(Phe) + AMP + diphosphate + H(+)</text>
        <dbReference type="Rhea" id="RHEA:19413"/>
        <dbReference type="Rhea" id="RHEA-COMP:9668"/>
        <dbReference type="Rhea" id="RHEA-COMP:9699"/>
        <dbReference type="ChEBI" id="CHEBI:15378"/>
        <dbReference type="ChEBI" id="CHEBI:30616"/>
        <dbReference type="ChEBI" id="CHEBI:33019"/>
        <dbReference type="ChEBI" id="CHEBI:58095"/>
        <dbReference type="ChEBI" id="CHEBI:78442"/>
        <dbReference type="ChEBI" id="CHEBI:78531"/>
        <dbReference type="ChEBI" id="CHEBI:456215"/>
        <dbReference type="EC" id="6.1.1.20"/>
    </reaction>
</comment>
<comment type="cofactor">
    <cofactor evidence="1">
        <name>Mg(2+)</name>
        <dbReference type="ChEBI" id="CHEBI:18420"/>
    </cofactor>
    <text evidence="1">Binds 2 magnesium ions per tetramer.</text>
</comment>
<comment type="subunit">
    <text evidence="1">Tetramer of two alpha and two beta subunits.</text>
</comment>
<comment type="subcellular location">
    <subcellularLocation>
        <location evidence="1">Cytoplasm</location>
    </subcellularLocation>
</comment>
<comment type="similarity">
    <text evidence="1">Belongs to the class-II aminoacyl-tRNA synthetase family. Phe-tRNA synthetase alpha subunit type 1 subfamily.</text>
</comment>
<protein>
    <recommendedName>
        <fullName evidence="1">Phenylalanine--tRNA ligase alpha subunit</fullName>
        <ecNumber evidence="1">6.1.1.20</ecNumber>
    </recommendedName>
    <alternativeName>
        <fullName evidence="1">Phenylalanyl-tRNA synthetase alpha subunit</fullName>
        <shortName evidence="1">PheRS</shortName>
    </alternativeName>
</protein>
<accession>Q8D3B6</accession>
<organism>
    <name type="scientific">Wigglesworthia glossinidia brevipalpis</name>
    <dbReference type="NCBI Taxonomy" id="36870"/>
    <lineage>
        <taxon>Bacteria</taxon>
        <taxon>Pseudomonadati</taxon>
        <taxon>Pseudomonadota</taxon>
        <taxon>Gammaproteobacteria</taxon>
        <taxon>Enterobacterales</taxon>
        <taxon>Erwiniaceae</taxon>
        <taxon>Wigglesworthia</taxon>
    </lineage>
</organism>
<feature type="chain" id="PRO_0000126795" description="Phenylalanine--tRNA ligase alpha subunit">
    <location>
        <begin position="1"/>
        <end position="333"/>
    </location>
</feature>
<feature type="binding site" evidence="1">
    <location>
        <position position="258"/>
    </location>
    <ligand>
        <name>Mg(2+)</name>
        <dbReference type="ChEBI" id="CHEBI:18420"/>
        <note>shared with beta subunit</note>
    </ligand>
</feature>
<evidence type="ECO:0000255" key="1">
    <source>
        <dbReference type="HAMAP-Rule" id="MF_00281"/>
    </source>
</evidence>
<dbReference type="EC" id="6.1.1.20" evidence="1"/>
<dbReference type="EMBL" id="BA000021">
    <property type="protein sequence ID" value="BAC24231.1"/>
    <property type="molecule type" value="Genomic_DNA"/>
</dbReference>
<dbReference type="SMR" id="Q8D3B6"/>
<dbReference type="STRING" id="36870.gene:10368563"/>
<dbReference type="KEGG" id="wbr:pheS"/>
<dbReference type="eggNOG" id="COG0016">
    <property type="taxonomic scope" value="Bacteria"/>
</dbReference>
<dbReference type="HOGENOM" id="CLU_025086_0_1_6"/>
<dbReference type="OrthoDB" id="9800719at2"/>
<dbReference type="Proteomes" id="UP000000562">
    <property type="component" value="Chromosome"/>
</dbReference>
<dbReference type="GO" id="GO:0005737">
    <property type="term" value="C:cytoplasm"/>
    <property type="evidence" value="ECO:0007669"/>
    <property type="project" value="UniProtKB-SubCell"/>
</dbReference>
<dbReference type="GO" id="GO:0005524">
    <property type="term" value="F:ATP binding"/>
    <property type="evidence" value="ECO:0007669"/>
    <property type="project" value="UniProtKB-UniRule"/>
</dbReference>
<dbReference type="GO" id="GO:0000287">
    <property type="term" value="F:magnesium ion binding"/>
    <property type="evidence" value="ECO:0007669"/>
    <property type="project" value="UniProtKB-UniRule"/>
</dbReference>
<dbReference type="GO" id="GO:0004826">
    <property type="term" value="F:phenylalanine-tRNA ligase activity"/>
    <property type="evidence" value="ECO:0007669"/>
    <property type="project" value="UniProtKB-UniRule"/>
</dbReference>
<dbReference type="GO" id="GO:0000049">
    <property type="term" value="F:tRNA binding"/>
    <property type="evidence" value="ECO:0007669"/>
    <property type="project" value="InterPro"/>
</dbReference>
<dbReference type="GO" id="GO:0006432">
    <property type="term" value="P:phenylalanyl-tRNA aminoacylation"/>
    <property type="evidence" value="ECO:0007669"/>
    <property type="project" value="UniProtKB-UniRule"/>
</dbReference>
<dbReference type="CDD" id="cd00496">
    <property type="entry name" value="PheRS_alpha_core"/>
    <property type="match status" value="1"/>
</dbReference>
<dbReference type="Gene3D" id="3.30.930.10">
    <property type="entry name" value="Bira Bifunctional Protein, Domain 2"/>
    <property type="match status" value="1"/>
</dbReference>
<dbReference type="HAMAP" id="MF_00281">
    <property type="entry name" value="Phe_tRNA_synth_alpha1"/>
    <property type="match status" value="1"/>
</dbReference>
<dbReference type="InterPro" id="IPR006195">
    <property type="entry name" value="aa-tRNA-synth_II"/>
</dbReference>
<dbReference type="InterPro" id="IPR045864">
    <property type="entry name" value="aa-tRNA-synth_II/BPL/LPL"/>
</dbReference>
<dbReference type="InterPro" id="IPR004529">
    <property type="entry name" value="Phe-tRNA-synth_IIc_asu"/>
</dbReference>
<dbReference type="InterPro" id="IPR022911">
    <property type="entry name" value="Phe_tRNA_ligase_alpha1_bac"/>
</dbReference>
<dbReference type="InterPro" id="IPR002319">
    <property type="entry name" value="Phenylalanyl-tRNA_Synthase"/>
</dbReference>
<dbReference type="InterPro" id="IPR010978">
    <property type="entry name" value="tRNA-bd_arm"/>
</dbReference>
<dbReference type="NCBIfam" id="TIGR00468">
    <property type="entry name" value="pheS"/>
    <property type="match status" value="1"/>
</dbReference>
<dbReference type="PANTHER" id="PTHR11538:SF41">
    <property type="entry name" value="PHENYLALANINE--TRNA LIGASE, MITOCHONDRIAL"/>
    <property type="match status" value="1"/>
</dbReference>
<dbReference type="PANTHER" id="PTHR11538">
    <property type="entry name" value="PHENYLALANYL-TRNA SYNTHETASE"/>
    <property type="match status" value="1"/>
</dbReference>
<dbReference type="Pfam" id="PF01409">
    <property type="entry name" value="tRNA-synt_2d"/>
    <property type="match status" value="1"/>
</dbReference>
<dbReference type="SUPFAM" id="SSF55681">
    <property type="entry name" value="Class II aaRS and biotin synthetases"/>
    <property type="match status" value="1"/>
</dbReference>
<dbReference type="SUPFAM" id="SSF46589">
    <property type="entry name" value="tRNA-binding arm"/>
    <property type="match status" value="1"/>
</dbReference>
<dbReference type="PROSITE" id="PS50862">
    <property type="entry name" value="AA_TRNA_LIGASE_II"/>
    <property type="match status" value="1"/>
</dbReference>
<gene>
    <name evidence="1" type="primary">pheS</name>
    <name type="ordered locus">WIGBR0850</name>
</gene>
<sequence length="333" mass="39322">MSYHLEKLNIKFIINQALIEIKNCKNIKELELIRIYWIGKNGFFSKKNKLLNILFPYEDFIKKDMLKKAYKKIKYIYFKKKQKIKNKEIKIKIFKEKIDISLPGRDVCNGSFHPISNIIRYSEKFFCSLGFSIVHGHEVENIYYNFDALNIPENHPSRTEHDTFWINENCLLRTQTSGIQIKVMESKKPPLKIISSGKVYRNDHDKTHTPMFHQLEGLMIDECIGISIVKSILYDFCYSLLGKKIKIRFRPSYFPFTEPSAEIDIMNEDGKWIEILGCGIVHPKILHNLKIDRNKYSGMAFGIGIERLAMLYYKLSDVRPLFINNLRFLKQFK</sequence>
<name>SYFA_WIGBR</name>
<proteinExistence type="inferred from homology"/>